<accession>Q53563</accession>
<comment type="function">
    <text>Responsible for the initial oxygenation of methane to methanol in methanotrophs. It also catalyzes the monohydroxylation of a variety of unactivated alkenes, alicyclic, aromatic and heterocyclic compounds. The component C is the iron-sulfur flavoprotein of sMMO.</text>
</comment>
<comment type="catalytic activity">
    <reaction>
        <text>methane + NADH + O2 + H(+) = methanol + NAD(+) + H2O</text>
        <dbReference type="Rhea" id="RHEA:13637"/>
        <dbReference type="ChEBI" id="CHEBI:15377"/>
        <dbReference type="ChEBI" id="CHEBI:15378"/>
        <dbReference type="ChEBI" id="CHEBI:15379"/>
        <dbReference type="ChEBI" id="CHEBI:16183"/>
        <dbReference type="ChEBI" id="CHEBI:17790"/>
        <dbReference type="ChEBI" id="CHEBI:57540"/>
        <dbReference type="ChEBI" id="CHEBI:57945"/>
        <dbReference type="EC" id="1.14.13.25"/>
    </reaction>
</comment>
<comment type="catalytic activity">
    <reaction>
        <text>methane + NADPH + O2 + H(+) = methanol + NADP(+) + H2O</text>
        <dbReference type="Rhea" id="RHEA:13641"/>
        <dbReference type="ChEBI" id="CHEBI:15377"/>
        <dbReference type="ChEBI" id="CHEBI:15378"/>
        <dbReference type="ChEBI" id="CHEBI:15379"/>
        <dbReference type="ChEBI" id="CHEBI:16183"/>
        <dbReference type="ChEBI" id="CHEBI:17790"/>
        <dbReference type="ChEBI" id="CHEBI:57783"/>
        <dbReference type="ChEBI" id="CHEBI:58349"/>
        <dbReference type="EC" id="1.14.13.25"/>
    </reaction>
</comment>
<comment type="cofactor">
    <cofactor>
        <name>[2Fe-2S] cluster</name>
        <dbReference type="ChEBI" id="CHEBI:190135"/>
    </cofactor>
    <text>Binds 1 [2Fe-2S] cluster.</text>
</comment>
<comment type="subunit">
    <text>The soluble methane monooxygenase (sMMO) consists of four components A/MMOH (composed of alpha/MmoX, beta/MmoY and gamma/MmoZ), B/MMOB (MmoB), C/MMOR (MmoC) and D/MMOD (MmoD).</text>
</comment>
<reference key="1">
    <citation type="journal article" date="1991" name="Arch. Microbiol.">
        <title>The methane monooxygenase gene cluster of Methylosinus trichosporium: cloning and sequencing of the mmoC gene.</title>
        <authorList>
            <person name="Cardy D.L.N."/>
            <person name="Laidler V."/>
            <person name="Salmond G.P.C."/>
            <person name="Murrell J.C."/>
        </authorList>
    </citation>
    <scope>NUCLEOTIDE SEQUENCE [GENOMIC DNA]</scope>
    <source>
        <strain>ATCC 35070 / NCIMB 11131 / ACM 3311 / OB3b</strain>
    </source>
</reference>
<reference key="2">
    <citation type="journal article" date="1991" name="J. Biol. Chem.">
        <title>Complex formation between the protein components of methane monooxygenase from Methylosinus trichosporium OB3b. Identification of sites of component interaction.</title>
        <authorList>
            <person name="Fox B.G."/>
            <person name="Liu Y."/>
            <person name="Dege J.E."/>
            <person name="Lipscomb J.D."/>
        </authorList>
    </citation>
    <scope>PROTEIN SEQUENCE OF 1-13</scope>
    <scope>CHARACTERIZATION</scope>
    <scope>COMPLEX FORMATION</scope>
    <source>
        <strain>ATCC 35070 / NCIMB 11131 / ACM 3311 / OB3b</strain>
    </source>
</reference>
<sequence>MYQIVIETEDGETCRRMRPSEDWISRAEAERNLLASCRAGCATCKADCTDGDYELIDVKVQAVPPDEEEDGKVLLCRTFPRSDLHLLVPYTYDRISFEAIQTNWLAEILACDRVSSNVVRLVLQRSRPMAARISLNFVPGQFVDIEIPGTHTRRSYSMASVAEDGQLEFIIRLLPDGAFSKFLQTEAKVGMRVDLRGPAGSFFLHDHGGRSRVFVAGGTGLSPVLSMIRQLGKASDPSPATLLFGVTNREELFYVDELKTLAQSMPTLGVRIAVVNDDGGNGVDKGTVIDLLRAELEIDLLLGHARRRRRRETARSCREDHRDRCPAWRSDFLEKFLASG</sequence>
<organism>
    <name type="scientific">Methylosinus trichosporium</name>
    <dbReference type="NCBI Taxonomy" id="426"/>
    <lineage>
        <taxon>Bacteria</taxon>
        <taxon>Pseudomonadati</taxon>
        <taxon>Pseudomonadota</taxon>
        <taxon>Alphaproteobacteria</taxon>
        <taxon>Hyphomicrobiales</taxon>
        <taxon>Methylocystaceae</taxon>
        <taxon>Methylosinus</taxon>
    </lineage>
</organism>
<feature type="chain" id="PRO_0000189409" description="Methane monooxygenase component C">
    <location>
        <begin position="1"/>
        <end position="340"/>
    </location>
</feature>
<feature type="domain" description="2Fe-2S ferredoxin-type">
    <location>
        <begin position="1"/>
        <end position="92"/>
    </location>
</feature>
<feature type="domain" description="FAD-binding FR-type" evidence="2">
    <location>
        <begin position="101"/>
        <end position="205"/>
    </location>
</feature>
<feature type="binding site">
    <location>
        <position position="37"/>
    </location>
    <ligand>
        <name>[2Fe-2S] cluster</name>
        <dbReference type="ChEBI" id="CHEBI:190135"/>
    </ligand>
</feature>
<feature type="binding site">
    <location>
        <position position="41"/>
    </location>
    <ligand>
        <name>[2Fe-2S] cluster</name>
        <dbReference type="ChEBI" id="CHEBI:190135"/>
    </ligand>
</feature>
<feature type="binding site">
    <location>
        <position position="44"/>
    </location>
    <ligand>
        <name>[2Fe-2S] cluster</name>
        <dbReference type="ChEBI" id="CHEBI:190135"/>
    </ligand>
</feature>
<feature type="binding site">
    <location>
        <position position="76"/>
    </location>
    <ligand>
        <name>[2Fe-2S] cluster</name>
        <dbReference type="ChEBI" id="CHEBI:190135"/>
    </ligand>
</feature>
<feature type="binding site" evidence="1">
    <location>
        <begin position="215"/>
        <end position="229"/>
    </location>
    <ligand>
        <name>FAD</name>
        <dbReference type="ChEBI" id="CHEBI:57692"/>
    </ligand>
</feature>
<evidence type="ECO:0000250" key="1"/>
<evidence type="ECO:0000255" key="2">
    <source>
        <dbReference type="PROSITE-ProRule" id="PRU00716"/>
    </source>
</evidence>
<keyword id="KW-0001">2Fe-2S</keyword>
<keyword id="KW-0903">Direct protein sequencing</keyword>
<keyword id="KW-0249">Electron transport</keyword>
<keyword id="KW-0274">FAD</keyword>
<keyword id="KW-0285">Flavoprotein</keyword>
<keyword id="KW-0408">Iron</keyword>
<keyword id="KW-0411">Iron-sulfur</keyword>
<keyword id="KW-0479">Metal-binding</keyword>
<keyword id="KW-0503">Monooxygenase</keyword>
<keyword id="KW-0521">NADP</keyword>
<keyword id="KW-0554">One-carbon metabolism</keyword>
<keyword id="KW-0560">Oxidoreductase</keyword>
<keyword id="KW-0813">Transport</keyword>
<dbReference type="EC" id="1.14.13.25"/>
<dbReference type="EMBL" id="S81887">
    <property type="protein sequence ID" value="AAB21393.1"/>
    <property type="molecule type" value="Genomic_DNA"/>
</dbReference>
<dbReference type="PIR" id="C48360">
    <property type="entry name" value="C48360"/>
</dbReference>
<dbReference type="SMR" id="Q53563"/>
<dbReference type="BioCyc" id="MetaCyc:MONOMER-3870"/>
<dbReference type="BRENDA" id="1.14.13.25">
    <property type="organism ID" value="3322"/>
</dbReference>
<dbReference type="GO" id="GO:0051537">
    <property type="term" value="F:2 iron, 2 sulfur cluster binding"/>
    <property type="evidence" value="ECO:0007669"/>
    <property type="project" value="UniProtKB-KW"/>
</dbReference>
<dbReference type="GO" id="GO:0046872">
    <property type="term" value="F:metal ion binding"/>
    <property type="evidence" value="ECO:0007669"/>
    <property type="project" value="UniProtKB-KW"/>
</dbReference>
<dbReference type="GO" id="GO:0015049">
    <property type="term" value="F:methane monooxygenase [NAD(P)H] activity"/>
    <property type="evidence" value="ECO:0007669"/>
    <property type="project" value="UniProtKB-EC"/>
</dbReference>
<dbReference type="GO" id="GO:0006730">
    <property type="term" value="P:one-carbon metabolic process"/>
    <property type="evidence" value="ECO:0007669"/>
    <property type="project" value="UniProtKB-KW"/>
</dbReference>
<dbReference type="CDD" id="cd00207">
    <property type="entry name" value="fer2"/>
    <property type="match status" value="1"/>
</dbReference>
<dbReference type="Gene3D" id="3.10.20.30">
    <property type="match status" value="1"/>
</dbReference>
<dbReference type="Gene3D" id="3.40.50.80">
    <property type="entry name" value="Nucleotide-binding domain of ferredoxin-NADP reductase (FNR) module"/>
    <property type="match status" value="1"/>
</dbReference>
<dbReference type="Gene3D" id="2.40.30.10">
    <property type="entry name" value="Translation factors"/>
    <property type="match status" value="1"/>
</dbReference>
<dbReference type="InterPro" id="IPR036010">
    <property type="entry name" value="2Fe-2S_ferredoxin-like_sf"/>
</dbReference>
<dbReference type="InterPro" id="IPR001041">
    <property type="entry name" value="2Fe-2S_ferredoxin-type"/>
</dbReference>
<dbReference type="InterPro" id="IPR012675">
    <property type="entry name" value="Beta-grasp_dom_sf"/>
</dbReference>
<dbReference type="InterPro" id="IPR008333">
    <property type="entry name" value="Cbr1-like_FAD-bd_dom"/>
</dbReference>
<dbReference type="InterPro" id="IPR017927">
    <property type="entry name" value="FAD-bd_FR_type"/>
</dbReference>
<dbReference type="InterPro" id="IPR001709">
    <property type="entry name" value="Flavoprot_Pyr_Nucl_cyt_Rdtase"/>
</dbReference>
<dbReference type="InterPro" id="IPR039261">
    <property type="entry name" value="FNR_nucleotide-bd"/>
</dbReference>
<dbReference type="InterPro" id="IPR050415">
    <property type="entry name" value="MRET"/>
</dbReference>
<dbReference type="InterPro" id="IPR001433">
    <property type="entry name" value="OxRdtase_FAD/NAD-bd"/>
</dbReference>
<dbReference type="InterPro" id="IPR017938">
    <property type="entry name" value="Riboflavin_synthase-like_b-brl"/>
</dbReference>
<dbReference type="PANTHER" id="PTHR47354">
    <property type="entry name" value="NADH OXIDOREDUCTASE HCR"/>
    <property type="match status" value="1"/>
</dbReference>
<dbReference type="PANTHER" id="PTHR47354:SF5">
    <property type="entry name" value="PROTEIN RFBI"/>
    <property type="match status" value="1"/>
</dbReference>
<dbReference type="Pfam" id="PF00970">
    <property type="entry name" value="FAD_binding_6"/>
    <property type="match status" value="1"/>
</dbReference>
<dbReference type="Pfam" id="PF00111">
    <property type="entry name" value="Fer2"/>
    <property type="match status" value="1"/>
</dbReference>
<dbReference type="Pfam" id="PF00175">
    <property type="entry name" value="NAD_binding_1"/>
    <property type="match status" value="1"/>
</dbReference>
<dbReference type="PRINTS" id="PR00371">
    <property type="entry name" value="FPNCR"/>
</dbReference>
<dbReference type="PRINTS" id="PR00410">
    <property type="entry name" value="PHEHYDRXLASE"/>
</dbReference>
<dbReference type="SUPFAM" id="SSF54292">
    <property type="entry name" value="2Fe-2S ferredoxin-like"/>
    <property type="match status" value="1"/>
</dbReference>
<dbReference type="SUPFAM" id="SSF52343">
    <property type="entry name" value="Ferredoxin reductase-like, C-terminal NADP-linked domain"/>
    <property type="match status" value="1"/>
</dbReference>
<dbReference type="SUPFAM" id="SSF63380">
    <property type="entry name" value="Riboflavin synthase domain-like"/>
    <property type="match status" value="1"/>
</dbReference>
<dbReference type="PROSITE" id="PS51384">
    <property type="entry name" value="FAD_FR"/>
    <property type="match status" value="1"/>
</dbReference>
<name>MMOC_METTR</name>
<proteinExistence type="evidence at protein level"/>
<protein>
    <recommendedName>
        <fullName>Methane monooxygenase component C</fullName>
        <ecNumber>1.14.13.25</ecNumber>
    </recommendedName>
    <alternativeName>
        <fullName>Methane hydroxylase</fullName>
    </alternativeName>
    <alternativeName>
        <fullName>Methane monooxygenase reductase</fullName>
        <shortName>MMOR</shortName>
    </alternativeName>
</protein>
<gene>
    <name type="primary">mmoC</name>
</gene>